<dbReference type="EC" id="2.7.11.33" evidence="1"/>
<dbReference type="EC" id="2.7.4.28" evidence="1"/>
<dbReference type="EMBL" id="AP008229">
    <property type="protein sequence ID" value="BAE68835.1"/>
    <property type="molecule type" value="Genomic_DNA"/>
</dbReference>
<dbReference type="RefSeq" id="WP_011408465.1">
    <property type="nucleotide sequence ID" value="NC_007705.1"/>
</dbReference>
<dbReference type="SMR" id="Q2P3P2"/>
<dbReference type="KEGG" id="xom:XOO2080"/>
<dbReference type="HOGENOM" id="CLU_046206_1_0_6"/>
<dbReference type="GO" id="GO:0043531">
    <property type="term" value="F:ADP binding"/>
    <property type="evidence" value="ECO:0007669"/>
    <property type="project" value="UniProtKB-UniRule"/>
</dbReference>
<dbReference type="GO" id="GO:0005524">
    <property type="term" value="F:ATP binding"/>
    <property type="evidence" value="ECO:0007669"/>
    <property type="project" value="InterPro"/>
</dbReference>
<dbReference type="GO" id="GO:0016776">
    <property type="term" value="F:phosphotransferase activity, phosphate group as acceptor"/>
    <property type="evidence" value="ECO:0007669"/>
    <property type="project" value="UniProtKB-UniRule"/>
</dbReference>
<dbReference type="GO" id="GO:0004674">
    <property type="term" value="F:protein serine/threonine kinase activity"/>
    <property type="evidence" value="ECO:0007669"/>
    <property type="project" value="UniProtKB-UniRule"/>
</dbReference>
<dbReference type="HAMAP" id="MF_01062">
    <property type="entry name" value="PSRP"/>
    <property type="match status" value="1"/>
</dbReference>
<dbReference type="InterPro" id="IPR005177">
    <property type="entry name" value="Kinase-pyrophosphorylase"/>
</dbReference>
<dbReference type="InterPro" id="IPR026530">
    <property type="entry name" value="PSRP"/>
</dbReference>
<dbReference type="NCBIfam" id="NF003742">
    <property type="entry name" value="PRK05339.1"/>
    <property type="match status" value="1"/>
</dbReference>
<dbReference type="PANTHER" id="PTHR31756">
    <property type="entry name" value="PYRUVATE, PHOSPHATE DIKINASE REGULATORY PROTEIN 1, CHLOROPLASTIC"/>
    <property type="match status" value="1"/>
</dbReference>
<dbReference type="PANTHER" id="PTHR31756:SF3">
    <property type="entry name" value="PYRUVATE, PHOSPHATE DIKINASE REGULATORY PROTEIN 1, CHLOROPLASTIC"/>
    <property type="match status" value="1"/>
</dbReference>
<dbReference type="Pfam" id="PF03618">
    <property type="entry name" value="Kinase-PPPase"/>
    <property type="match status" value="1"/>
</dbReference>
<gene>
    <name type="ordered locus">XOO2080</name>
</gene>
<protein>
    <recommendedName>
        <fullName evidence="1">Putative phosphoenolpyruvate synthase regulatory protein</fullName>
        <shortName evidence="1">PEP synthase regulatory protein</shortName>
        <shortName evidence="1">PSRP</shortName>
        <ecNumber evidence="1">2.7.11.33</ecNumber>
        <ecNumber evidence="1">2.7.4.28</ecNumber>
    </recommendedName>
    <alternativeName>
        <fullName evidence="1">Pyruvate, water dikinase regulatory protein</fullName>
    </alternativeName>
</protein>
<reference key="1">
    <citation type="journal article" date="2005" name="Jpn. Agric. Res. Q.">
        <title>Genome sequence of Xanthomonas oryzae pv. oryzae suggests contribution of large numbers of effector genes and insertion sequences to its race diversity.</title>
        <authorList>
            <person name="Ochiai H."/>
            <person name="Inoue Y."/>
            <person name="Takeya M."/>
            <person name="Sasaki A."/>
            <person name="Kaku H."/>
        </authorList>
    </citation>
    <scope>NUCLEOTIDE SEQUENCE [LARGE SCALE GENOMIC DNA]</scope>
    <source>
        <strain>MAFF 311018</strain>
    </source>
</reference>
<feature type="chain" id="PRO_0000316756" description="Putative phosphoenolpyruvate synthase regulatory protein">
    <location>
        <begin position="1"/>
        <end position="273"/>
    </location>
</feature>
<feature type="binding site" evidence="1">
    <location>
        <begin position="153"/>
        <end position="160"/>
    </location>
    <ligand>
        <name>ADP</name>
        <dbReference type="ChEBI" id="CHEBI:456216"/>
    </ligand>
</feature>
<accession>Q2P3P2</accession>
<proteinExistence type="inferred from homology"/>
<sequence length="273" mass="30896">MSTIRPVFYVSDGTGITAETIGHSLLTQFSGFNFVTDRMSFIDDAEKARDAAMRVRAAGERYQVRPVVVNSCVDPQLSMILAESGALMLDVFAPFIEPLERELNAPRHSRVGRAHGMVDFETYHRRINAMNFALSHDDGIALNYDEADVILVAVSRAGKTPTCIYLALHYGIRAANYPLTDEDLENERLPPRLRNYRSKLFGLTIDPERLQQIRQERRANSRYSAAETCRREVAIAERMFQMERIPSLSTTNTSIEEISSKVLSTLGLQREMF</sequence>
<organism>
    <name type="scientific">Xanthomonas oryzae pv. oryzae (strain MAFF 311018)</name>
    <dbReference type="NCBI Taxonomy" id="342109"/>
    <lineage>
        <taxon>Bacteria</taxon>
        <taxon>Pseudomonadati</taxon>
        <taxon>Pseudomonadota</taxon>
        <taxon>Gammaproteobacteria</taxon>
        <taxon>Lysobacterales</taxon>
        <taxon>Lysobacteraceae</taxon>
        <taxon>Xanthomonas</taxon>
    </lineage>
</organism>
<comment type="function">
    <text evidence="1">Bifunctional serine/threonine kinase and phosphorylase involved in the regulation of the phosphoenolpyruvate synthase (PEPS) by catalyzing its phosphorylation/dephosphorylation.</text>
</comment>
<comment type="catalytic activity">
    <reaction evidence="1">
        <text>[pyruvate, water dikinase] + ADP = [pyruvate, water dikinase]-phosphate + AMP + H(+)</text>
        <dbReference type="Rhea" id="RHEA:46020"/>
        <dbReference type="Rhea" id="RHEA-COMP:11425"/>
        <dbReference type="Rhea" id="RHEA-COMP:11426"/>
        <dbReference type="ChEBI" id="CHEBI:15378"/>
        <dbReference type="ChEBI" id="CHEBI:43176"/>
        <dbReference type="ChEBI" id="CHEBI:68546"/>
        <dbReference type="ChEBI" id="CHEBI:456215"/>
        <dbReference type="ChEBI" id="CHEBI:456216"/>
        <dbReference type="EC" id="2.7.11.33"/>
    </reaction>
</comment>
<comment type="catalytic activity">
    <reaction evidence="1">
        <text>[pyruvate, water dikinase]-phosphate + phosphate + H(+) = [pyruvate, water dikinase] + diphosphate</text>
        <dbReference type="Rhea" id="RHEA:48580"/>
        <dbReference type="Rhea" id="RHEA-COMP:11425"/>
        <dbReference type="Rhea" id="RHEA-COMP:11426"/>
        <dbReference type="ChEBI" id="CHEBI:15378"/>
        <dbReference type="ChEBI" id="CHEBI:33019"/>
        <dbReference type="ChEBI" id="CHEBI:43176"/>
        <dbReference type="ChEBI" id="CHEBI:43474"/>
        <dbReference type="ChEBI" id="CHEBI:68546"/>
        <dbReference type="EC" id="2.7.4.28"/>
    </reaction>
</comment>
<comment type="similarity">
    <text evidence="1">Belongs to the pyruvate, phosphate/water dikinase regulatory protein family. PSRP subfamily.</text>
</comment>
<name>PSRP_XANOM</name>
<evidence type="ECO:0000255" key="1">
    <source>
        <dbReference type="HAMAP-Rule" id="MF_01062"/>
    </source>
</evidence>
<keyword id="KW-0418">Kinase</keyword>
<keyword id="KW-0547">Nucleotide-binding</keyword>
<keyword id="KW-0723">Serine/threonine-protein kinase</keyword>
<keyword id="KW-0808">Transferase</keyword>